<protein>
    <recommendedName>
        <fullName evidence="1">ATP-dependent Clp protease proteolytic subunit</fullName>
        <ecNumber evidence="1">3.4.21.92</ecNumber>
    </recommendedName>
    <alternativeName>
        <fullName evidence="1">Endopeptidase Clp</fullName>
    </alternativeName>
</protein>
<accession>A5FRE5</accession>
<organism>
    <name type="scientific">Dehalococcoides mccartyi (strain ATCC BAA-2100 / JCM 16839 / KCTC 5957 / BAV1)</name>
    <dbReference type="NCBI Taxonomy" id="216389"/>
    <lineage>
        <taxon>Bacteria</taxon>
        <taxon>Bacillati</taxon>
        <taxon>Chloroflexota</taxon>
        <taxon>Dehalococcoidia</taxon>
        <taxon>Dehalococcoidales</taxon>
        <taxon>Dehalococcoidaceae</taxon>
        <taxon>Dehalococcoides</taxon>
    </lineage>
</organism>
<comment type="function">
    <text evidence="1">Cleaves peptides in various proteins in a process that requires ATP hydrolysis. Has a chymotrypsin-like activity. Plays a major role in the degradation of misfolded proteins.</text>
</comment>
<comment type="catalytic activity">
    <reaction evidence="1">
        <text>Hydrolysis of proteins to small peptides in the presence of ATP and magnesium. alpha-casein is the usual test substrate. In the absence of ATP, only oligopeptides shorter than five residues are hydrolyzed (such as succinyl-Leu-Tyr-|-NHMec, and Leu-Tyr-Leu-|-Tyr-Trp, in which cleavage of the -Tyr-|-Leu- and -Tyr-|-Trp bonds also occurs).</text>
        <dbReference type="EC" id="3.4.21.92"/>
    </reaction>
</comment>
<comment type="subunit">
    <text evidence="1">Fourteen ClpP subunits assemble into 2 heptameric rings which stack back to back to give a disk-like structure with a central cavity, resembling the structure of eukaryotic proteasomes.</text>
</comment>
<comment type="subcellular location">
    <subcellularLocation>
        <location evidence="1">Cytoplasm</location>
    </subcellularLocation>
</comment>
<comment type="similarity">
    <text evidence="1">Belongs to the peptidase S14 family.</text>
</comment>
<feature type="chain" id="PRO_1000080888" description="ATP-dependent Clp protease proteolytic subunit">
    <location>
        <begin position="1"/>
        <end position="200"/>
    </location>
</feature>
<feature type="active site" description="Nucleophile" evidence="1">
    <location>
        <position position="102"/>
    </location>
</feature>
<feature type="active site" evidence="1">
    <location>
        <position position="127"/>
    </location>
</feature>
<sequence>MISPENVVPMVIESSARGERAFDIYSLLLKERIIFLGSQINDQVANLVIAQLLFLDREDPDKDISLYIHSPGGVISAGLAMYDTMQLIRPKVSTICVGVAASMATVLLCAGAKGKRYALPNATIHMHQAMGGAQGQASDIEIAAREIMRQQDILRNILVKHTGQTMEKIVHDSDRDYYLSAQQAVEYGLIDEILQKPENK</sequence>
<proteinExistence type="inferred from homology"/>
<evidence type="ECO:0000255" key="1">
    <source>
        <dbReference type="HAMAP-Rule" id="MF_00444"/>
    </source>
</evidence>
<gene>
    <name evidence="1" type="primary">clpP</name>
    <name type="ordered locus">DehaBAV1_0645</name>
</gene>
<dbReference type="EC" id="3.4.21.92" evidence="1"/>
<dbReference type="EMBL" id="CP000688">
    <property type="protein sequence ID" value="ABQ17230.1"/>
    <property type="molecule type" value="Genomic_DNA"/>
</dbReference>
<dbReference type="SMR" id="A5FRE5"/>
<dbReference type="MEROPS" id="S14.001"/>
<dbReference type="KEGG" id="deb:DehaBAV1_0645"/>
<dbReference type="PATRIC" id="fig|216389.18.peg.693"/>
<dbReference type="HOGENOM" id="CLU_058707_3_2_0"/>
<dbReference type="GO" id="GO:0005737">
    <property type="term" value="C:cytoplasm"/>
    <property type="evidence" value="ECO:0007669"/>
    <property type="project" value="UniProtKB-SubCell"/>
</dbReference>
<dbReference type="GO" id="GO:0009368">
    <property type="term" value="C:endopeptidase Clp complex"/>
    <property type="evidence" value="ECO:0007669"/>
    <property type="project" value="TreeGrafter"/>
</dbReference>
<dbReference type="GO" id="GO:0004176">
    <property type="term" value="F:ATP-dependent peptidase activity"/>
    <property type="evidence" value="ECO:0007669"/>
    <property type="project" value="InterPro"/>
</dbReference>
<dbReference type="GO" id="GO:0051117">
    <property type="term" value="F:ATPase binding"/>
    <property type="evidence" value="ECO:0007669"/>
    <property type="project" value="TreeGrafter"/>
</dbReference>
<dbReference type="GO" id="GO:0004252">
    <property type="term" value="F:serine-type endopeptidase activity"/>
    <property type="evidence" value="ECO:0007669"/>
    <property type="project" value="UniProtKB-UniRule"/>
</dbReference>
<dbReference type="GO" id="GO:0006515">
    <property type="term" value="P:protein quality control for misfolded or incompletely synthesized proteins"/>
    <property type="evidence" value="ECO:0007669"/>
    <property type="project" value="TreeGrafter"/>
</dbReference>
<dbReference type="CDD" id="cd07017">
    <property type="entry name" value="S14_ClpP_2"/>
    <property type="match status" value="1"/>
</dbReference>
<dbReference type="FunFam" id="3.90.226.10:FF:000001">
    <property type="entry name" value="ATP-dependent Clp protease proteolytic subunit"/>
    <property type="match status" value="1"/>
</dbReference>
<dbReference type="Gene3D" id="3.90.226.10">
    <property type="entry name" value="2-enoyl-CoA Hydratase, Chain A, domain 1"/>
    <property type="match status" value="1"/>
</dbReference>
<dbReference type="HAMAP" id="MF_00444">
    <property type="entry name" value="ClpP"/>
    <property type="match status" value="1"/>
</dbReference>
<dbReference type="InterPro" id="IPR001907">
    <property type="entry name" value="ClpP"/>
</dbReference>
<dbReference type="InterPro" id="IPR029045">
    <property type="entry name" value="ClpP/crotonase-like_dom_sf"/>
</dbReference>
<dbReference type="InterPro" id="IPR023562">
    <property type="entry name" value="ClpP/TepA"/>
</dbReference>
<dbReference type="InterPro" id="IPR018215">
    <property type="entry name" value="ClpP_Ser_AS"/>
</dbReference>
<dbReference type="NCBIfam" id="NF001368">
    <property type="entry name" value="PRK00277.1"/>
    <property type="match status" value="1"/>
</dbReference>
<dbReference type="NCBIfam" id="NF009205">
    <property type="entry name" value="PRK12553.1"/>
    <property type="match status" value="1"/>
</dbReference>
<dbReference type="PANTHER" id="PTHR10381">
    <property type="entry name" value="ATP-DEPENDENT CLP PROTEASE PROTEOLYTIC SUBUNIT"/>
    <property type="match status" value="1"/>
</dbReference>
<dbReference type="PANTHER" id="PTHR10381:SF70">
    <property type="entry name" value="ATP-DEPENDENT CLP PROTEASE PROTEOLYTIC SUBUNIT"/>
    <property type="match status" value="1"/>
</dbReference>
<dbReference type="Pfam" id="PF00574">
    <property type="entry name" value="CLP_protease"/>
    <property type="match status" value="1"/>
</dbReference>
<dbReference type="PRINTS" id="PR00127">
    <property type="entry name" value="CLPPROTEASEP"/>
</dbReference>
<dbReference type="SUPFAM" id="SSF52096">
    <property type="entry name" value="ClpP/crotonase"/>
    <property type="match status" value="1"/>
</dbReference>
<dbReference type="PROSITE" id="PS00381">
    <property type="entry name" value="CLP_PROTEASE_SER"/>
    <property type="match status" value="1"/>
</dbReference>
<keyword id="KW-0963">Cytoplasm</keyword>
<keyword id="KW-0378">Hydrolase</keyword>
<keyword id="KW-0645">Protease</keyword>
<keyword id="KW-0720">Serine protease</keyword>
<name>CLPP_DEHMB</name>
<reference key="1">
    <citation type="submission" date="2007-05" db="EMBL/GenBank/DDBJ databases">
        <title>Complete sequence of Dehalococcoides sp. BAV1.</title>
        <authorList>
            <consortium name="US DOE Joint Genome Institute"/>
            <person name="Copeland A."/>
            <person name="Lucas S."/>
            <person name="Lapidus A."/>
            <person name="Barry K."/>
            <person name="Detter J.C."/>
            <person name="Glavina del Rio T."/>
            <person name="Hammon N."/>
            <person name="Israni S."/>
            <person name="Pitluck S."/>
            <person name="Lowry S."/>
            <person name="Clum A."/>
            <person name="Schmutz J."/>
            <person name="Larimer F."/>
            <person name="Land M."/>
            <person name="Hauser L."/>
            <person name="Kyrpides N."/>
            <person name="Kim E."/>
            <person name="Ritalahti K.M."/>
            <person name="Loeffler F."/>
            <person name="Richardson P."/>
        </authorList>
    </citation>
    <scope>NUCLEOTIDE SEQUENCE [LARGE SCALE GENOMIC DNA]</scope>
    <source>
        <strain>ATCC BAA-2100 / JCM 16839 / KCTC 5957 / BAV1</strain>
    </source>
</reference>